<proteinExistence type="inferred from homology"/>
<dbReference type="EMBL" id="CP001291">
    <property type="protein sequence ID" value="ACK69471.1"/>
    <property type="molecule type" value="Genomic_DNA"/>
</dbReference>
<dbReference type="RefSeq" id="WP_012598418.1">
    <property type="nucleotide sequence ID" value="NC_011729.1"/>
</dbReference>
<dbReference type="SMR" id="B7KIR5"/>
<dbReference type="STRING" id="65393.PCC7424_1017"/>
<dbReference type="KEGG" id="cyc:PCC7424_1017"/>
<dbReference type="eggNOG" id="COG0222">
    <property type="taxonomic scope" value="Bacteria"/>
</dbReference>
<dbReference type="HOGENOM" id="CLU_086499_3_0_3"/>
<dbReference type="OrthoDB" id="9811748at2"/>
<dbReference type="Proteomes" id="UP000002384">
    <property type="component" value="Chromosome"/>
</dbReference>
<dbReference type="GO" id="GO:0022625">
    <property type="term" value="C:cytosolic large ribosomal subunit"/>
    <property type="evidence" value="ECO:0007669"/>
    <property type="project" value="TreeGrafter"/>
</dbReference>
<dbReference type="GO" id="GO:0003729">
    <property type="term" value="F:mRNA binding"/>
    <property type="evidence" value="ECO:0007669"/>
    <property type="project" value="TreeGrafter"/>
</dbReference>
<dbReference type="GO" id="GO:0003735">
    <property type="term" value="F:structural constituent of ribosome"/>
    <property type="evidence" value="ECO:0007669"/>
    <property type="project" value="InterPro"/>
</dbReference>
<dbReference type="GO" id="GO:0006412">
    <property type="term" value="P:translation"/>
    <property type="evidence" value="ECO:0007669"/>
    <property type="project" value="UniProtKB-UniRule"/>
</dbReference>
<dbReference type="CDD" id="cd00387">
    <property type="entry name" value="Ribosomal_L7_L12"/>
    <property type="match status" value="1"/>
</dbReference>
<dbReference type="FunFam" id="3.30.1390.10:FF:000001">
    <property type="entry name" value="50S ribosomal protein L7/L12"/>
    <property type="match status" value="1"/>
</dbReference>
<dbReference type="Gene3D" id="3.30.1390.10">
    <property type="match status" value="1"/>
</dbReference>
<dbReference type="Gene3D" id="1.20.5.710">
    <property type="entry name" value="Single helix bin"/>
    <property type="match status" value="1"/>
</dbReference>
<dbReference type="HAMAP" id="MF_00368">
    <property type="entry name" value="Ribosomal_bL12"/>
    <property type="match status" value="1"/>
</dbReference>
<dbReference type="InterPro" id="IPR000206">
    <property type="entry name" value="Ribosomal_bL12"/>
</dbReference>
<dbReference type="InterPro" id="IPR013823">
    <property type="entry name" value="Ribosomal_bL12_C"/>
</dbReference>
<dbReference type="InterPro" id="IPR014719">
    <property type="entry name" value="Ribosomal_bL12_C/ClpS-like"/>
</dbReference>
<dbReference type="InterPro" id="IPR008932">
    <property type="entry name" value="Ribosomal_bL12_oligo"/>
</dbReference>
<dbReference type="InterPro" id="IPR036235">
    <property type="entry name" value="Ribosomal_bL12_oligo_N_sf"/>
</dbReference>
<dbReference type="NCBIfam" id="TIGR00855">
    <property type="entry name" value="L12"/>
    <property type="match status" value="1"/>
</dbReference>
<dbReference type="PANTHER" id="PTHR45987">
    <property type="entry name" value="39S RIBOSOMAL PROTEIN L12"/>
    <property type="match status" value="1"/>
</dbReference>
<dbReference type="PANTHER" id="PTHR45987:SF4">
    <property type="entry name" value="LARGE RIBOSOMAL SUBUNIT PROTEIN BL12M"/>
    <property type="match status" value="1"/>
</dbReference>
<dbReference type="Pfam" id="PF00542">
    <property type="entry name" value="Ribosomal_L12"/>
    <property type="match status" value="1"/>
</dbReference>
<dbReference type="Pfam" id="PF16320">
    <property type="entry name" value="Ribosomal_L12_N"/>
    <property type="match status" value="1"/>
</dbReference>
<dbReference type="SUPFAM" id="SSF54736">
    <property type="entry name" value="ClpS-like"/>
    <property type="match status" value="1"/>
</dbReference>
<dbReference type="SUPFAM" id="SSF48300">
    <property type="entry name" value="Ribosomal protein L7/12, oligomerisation (N-terminal) domain"/>
    <property type="match status" value="1"/>
</dbReference>
<protein>
    <recommendedName>
        <fullName evidence="1">Large ribosomal subunit protein bL12</fullName>
    </recommendedName>
    <alternativeName>
        <fullName evidence="3">50S ribosomal protein L7/L12</fullName>
    </alternativeName>
</protein>
<gene>
    <name evidence="1" type="primary">rplL</name>
    <name evidence="1" type="synonym">rpl12</name>
    <name type="ordered locus">PCC7424_1017</name>
</gene>
<accession>B7KIR5</accession>
<keyword id="KW-1185">Reference proteome</keyword>
<keyword id="KW-0687">Ribonucleoprotein</keyword>
<keyword id="KW-0689">Ribosomal protein</keyword>
<feature type="chain" id="PRO_1000121421" description="Large ribosomal subunit protein bL12">
    <location>
        <begin position="1"/>
        <end position="131"/>
    </location>
</feature>
<feature type="region of interest" description="Disordered" evidence="2">
    <location>
        <begin position="99"/>
        <end position="131"/>
    </location>
</feature>
<feature type="compositionally biased region" description="Basic and acidic residues" evidence="2">
    <location>
        <begin position="99"/>
        <end position="125"/>
    </location>
</feature>
<name>RL7_GLOC7</name>
<comment type="function">
    <text evidence="1">Forms part of the ribosomal stalk which helps the ribosome interact with GTP-bound translation factors. Is thus essential for accurate translation.</text>
</comment>
<comment type="subunit">
    <text evidence="1">Homodimer. Part of the ribosomal stalk of the 50S ribosomal subunit. Forms a multimeric L10(L12)X complex, where L10 forms an elongated spine to which 2 to 4 L12 dimers bind in a sequential fashion. Binds GTP-bound translation factors.</text>
</comment>
<comment type="similarity">
    <text evidence="1">Belongs to the bacterial ribosomal protein bL12 family.</text>
</comment>
<reference key="1">
    <citation type="journal article" date="2011" name="MBio">
        <title>Novel metabolic attributes of the genus Cyanothece, comprising a group of unicellular nitrogen-fixing Cyanobacteria.</title>
        <authorList>
            <person name="Bandyopadhyay A."/>
            <person name="Elvitigala T."/>
            <person name="Welsh E."/>
            <person name="Stockel J."/>
            <person name="Liberton M."/>
            <person name="Min H."/>
            <person name="Sherman L.A."/>
            <person name="Pakrasi H.B."/>
        </authorList>
    </citation>
    <scope>NUCLEOTIDE SEQUENCE [LARGE SCALE GENOMIC DNA]</scope>
    <source>
        <strain>PCC 7424</strain>
    </source>
</reference>
<sequence length="131" mass="13817">MSAATDEILEKLKSLSLLEAAELVKQIEETFGVSAAAPVGGMMMAAPGAVPGAAAEPEEEKTEFDVILEEVPADKKIAILKVVRTITGLGLKEAKDLVESTPKPIKEGTNKDDAEETKKKLEEAGAKVTVK</sequence>
<evidence type="ECO:0000255" key="1">
    <source>
        <dbReference type="HAMAP-Rule" id="MF_00368"/>
    </source>
</evidence>
<evidence type="ECO:0000256" key="2">
    <source>
        <dbReference type="SAM" id="MobiDB-lite"/>
    </source>
</evidence>
<evidence type="ECO:0000305" key="3"/>
<organism>
    <name type="scientific">Gloeothece citriformis (strain PCC 7424)</name>
    <name type="common">Cyanothece sp. (strain PCC 7424)</name>
    <dbReference type="NCBI Taxonomy" id="65393"/>
    <lineage>
        <taxon>Bacteria</taxon>
        <taxon>Bacillati</taxon>
        <taxon>Cyanobacteriota</taxon>
        <taxon>Cyanophyceae</taxon>
        <taxon>Oscillatoriophycideae</taxon>
        <taxon>Chroococcales</taxon>
        <taxon>Aphanothecaceae</taxon>
        <taxon>Gloeothece</taxon>
        <taxon>Gloeothece citriformis</taxon>
    </lineage>
</organism>